<dbReference type="EMBL" id="CP000267">
    <property type="protein sequence ID" value="ABD70899.1"/>
    <property type="molecule type" value="Genomic_DNA"/>
</dbReference>
<dbReference type="SMR" id="Q21TK4"/>
<dbReference type="STRING" id="338969.Rfer_3190"/>
<dbReference type="KEGG" id="rfr:Rfer_3190"/>
<dbReference type="eggNOG" id="COG0218">
    <property type="taxonomic scope" value="Bacteria"/>
</dbReference>
<dbReference type="HOGENOM" id="CLU_033732_1_1_4"/>
<dbReference type="Proteomes" id="UP000008332">
    <property type="component" value="Chromosome"/>
</dbReference>
<dbReference type="GO" id="GO:0005829">
    <property type="term" value="C:cytosol"/>
    <property type="evidence" value="ECO:0007669"/>
    <property type="project" value="TreeGrafter"/>
</dbReference>
<dbReference type="GO" id="GO:0005525">
    <property type="term" value="F:GTP binding"/>
    <property type="evidence" value="ECO:0007669"/>
    <property type="project" value="UniProtKB-UniRule"/>
</dbReference>
<dbReference type="GO" id="GO:0046872">
    <property type="term" value="F:metal ion binding"/>
    <property type="evidence" value="ECO:0007669"/>
    <property type="project" value="UniProtKB-KW"/>
</dbReference>
<dbReference type="GO" id="GO:0000917">
    <property type="term" value="P:division septum assembly"/>
    <property type="evidence" value="ECO:0007669"/>
    <property type="project" value="UniProtKB-KW"/>
</dbReference>
<dbReference type="CDD" id="cd01876">
    <property type="entry name" value="YihA_EngB"/>
    <property type="match status" value="1"/>
</dbReference>
<dbReference type="Gene3D" id="3.40.50.300">
    <property type="entry name" value="P-loop containing nucleotide triphosphate hydrolases"/>
    <property type="match status" value="1"/>
</dbReference>
<dbReference type="HAMAP" id="MF_00321">
    <property type="entry name" value="GTPase_EngB"/>
    <property type="match status" value="1"/>
</dbReference>
<dbReference type="InterPro" id="IPR030393">
    <property type="entry name" value="G_ENGB_dom"/>
</dbReference>
<dbReference type="InterPro" id="IPR006073">
    <property type="entry name" value="GTP-bd"/>
</dbReference>
<dbReference type="InterPro" id="IPR019987">
    <property type="entry name" value="GTP-bd_ribosome_bio_YsxC"/>
</dbReference>
<dbReference type="InterPro" id="IPR027417">
    <property type="entry name" value="P-loop_NTPase"/>
</dbReference>
<dbReference type="NCBIfam" id="TIGR03598">
    <property type="entry name" value="GTPase_YsxC"/>
    <property type="match status" value="1"/>
</dbReference>
<dbReference type="PANTHER" id="PTHR11649:SF13">
    <property type="entry name" value="ENGB-TYPE G DOMAIN-CONTAINING PROTEIN"/>
    <property type="match status" value="1"/>
</dbReference>
<dbReference type="PANTHER" id="PTHR11649">
    <property type="entry name" value="MSS1/TRME-RELATED GTP-BINDING PROTEIN"/>
    <property type="match status" value="1"/>
</dbReference>
<dbReference type="Pfam" id="PF01926">
    <property type="entry name" value="MMR_HSR1"/>
    <property type="match status" value="1"/>
</dbReference>
<dbReference type="SUPFAM" id="SSF52540">
    <property type="entry name" value="P-loop containing nucleoside triphosphate hydrolases"/>
    <property type="match status" value="1"/>
</dbReference>
<dbReference type="PROSITE" id="PS51706">
    <property type="entry name" value="G_ENGB"/>
    <property type="match status" value="1"/>
</dbReference>
<organism>
    <name type="scientific">Albidiferax ferrireducens (strain ATCC BAA-621 / DSM 15236 / T118)</name>
    <name type="common">Rhodoferax ferrireducens</name>
    <dbReference type="NCBI Taxonomy" id="338969"/>
    <lineage>
        <taxon>Bacteria</taxon>
        <taxon>Pseudomonadati</taxon>
        <taxon>Pseudomonadota</taxon>
        <taxon>Betaproteobacteria</taxon>
        <taxon>Burkholderiales</taxon>
        <taxon>Comamonadaceae</taxon>
        <taxon>Rhodoferax</taxon>
    </lineage>
</organism>
<comment type="function">
    <text evidence="1">Necessary for normal cell division and for the maintenance of normal septation.</text>
</comment>
<comment type="cofactor">
    <cofactor evidence="1">
        <name>Mg(2+)</name>
        <dbReference type="ChEBI" id="CHEBI:18420"/>
    </cofactor>
</comment>
<comment type="similarity">
    <text evidence="1">Belongs to the TRAFAC class TrmE-Era-EngA-EngB-Septin-like GTPase superfamily. EngB GTPase family.</text>
</comment>
<accession>Q21TK4</accession>
<keyword id="KW-0131">Cell cycle</keyword>
<keyword id="KW-0132">Cell division</keyword>
<keyword id="KW-0342">GTP-binding</keyword>
<keyword id="KW-0460">Magnesium</keyword>
<keyword id="KW-0479">Metal-binding</keyword>
<keyword id="KW-0547">Nucleotide-binding</keyword>
<keyword id="KW-1185">Reference proteome</keyword>
<keyword id="KW-0717">Septation</keyword>
<gene>
    <name evidence="1" type="primary">engB</name>
    <name type="ordered locus">Rfer_3190</name>
</gene>
<name>ENGB_ALBFT</name>
<proteinExistence type="inferred from homology"/>
<evidence type="ECO:0000255" key="1">
    <source>
        <dbReference type="HAMAP-Rule" id="MF_00321"/>
    </source>
</evidence>
<sequence length="207" mass="22833">MALGWLHTAKFLTTAPQLHFLPALDVPEIAFVGRSNAGKSTCINTLTQQKQLAFASKKPGRTQHINLFSLGKQGVTDAVFADLPGYGYAAVPKQDKIRWQQVMANYLVTRENLKAIVLMCDPRHGLTELDEILLDIVRPRVEEGLKFLVVLTKADKLTRTEQTKALSIMKLQAGGGEVRLFSATKRQGIDDVATLLWQWAHPADGAA</sequence>
<reference key="1">
    <citation type="submission" date="2006-02" db="EMBL/GenBank/DDBJ databases">
        <title>Complete sequence of chromosome of Rhodoferax ferrireducens DSM 15236.</title>
        <authorList>
            <person name="Copeland A."/>
            <person name="Lucas S."/>
            <person name="Lapidus A."/>
            <person name="Barry K."/>
            <person name="Detter J.C."/>
            <person name="Glavina del Rio T."/>
            <person name="Hammon N."/>
            <person name="Israni S."/>
            <person name="Pitluck S."/>
            <person name="Brettin T."/>
            <person name="Bruce D."/>
            <person name="Han C."/>
            <person name="Tapia R."/>
            <person name="Gilna P."/>
            <person name="Kiss H."/>
            <person name="Schmutz J."/>
            <person name="Larimer F."/>
            <person name="Land M."/>
            <person name="Kyrpides N."/>
            <person name="Ivanova N."/>
            <person name="Richardson P."/>
        </authorList>
    </citation>
    <scope>NUCLEOTIDE SEQUENCE [LARGE SCALE GENOMIC DNA]</scope>
    <source>
        <strain>ATCC BAA-621 / DSM 15236 / T118</strain>
    </source>
</reference>
<protein>
    <recommendedName>
        <fullName evidence="1">Probable GTP-binding protein EngB</fullName>
    </recommendedName>
</protein>
<feature type="chain" id="PRO_0000266929" description="Probable GTP-binding protein EngB">
    <location>
        <begin position="1"/>
        <end position="207"/>
    </location>
</feature>
<feature type="domain" description="EngB-type G" evidence="1">
    <location>
        <begin position="25"/>
        <end position="202"/>
    </location>
</feature>
<feature type="binding site" evidence="1">
    <location>
        <begin position="33"/>
        <end position="40"/>
    </location>
    <ligand>
        <name>GTP</name>
        <dbReference type="ChEBI" id="CHEBI:37565"/>
    </ligand>
</feature>
<feature type="binding site" evidence="1">
    <location>
        <position position="40"/>
    </location>
    <ligand>
        <name>Mg(2+)</name>
        <dbReference type="ChEBI" id="CHEBI:18420"/>
    </ligand>
</feature>
<feature type="binding site" evidence="1">
    <location>
        <begin position="60"/>
        <end position="64"/>
    </location>
    <ligand>
        <name>GTP</name>
        <dbReference type="ChEBI" id="CHEBI:37565"/>
    </ligand>
</feature>
<feature type="binding site" evidence="1">
    <location>
        <position position="62"/>
    </location>
    <ligand>
        <name>Mg(2+)</name>
        <dbReference type="ChEBI" id="CHEBI:18420"/>
    </ligand>
</feature>
<feature type="binding site" evidence="1">
    <location>
        <begin position="82"/>
        <end position="85"/>
    </location>
    <ligand>
        <name>GTP</name>
        <dbReference type="ChEBI" id="CHEBI:37565"/>
    </ligand>
</feature>
<feature type="binding site" evidence="1">
    <location>
        <begin position="152"/>
        <end position="155"/>
    </location>
    <ligand>
        <name>GTP</name>
        <dbReference type="ChEBI" id="CHEBI:37565"/>
    </ligand>
</feature>
<feature type="binding site" evidence="1">
    <location>
        <begin position="181"/>
        <end position="183"/>
    </location>
    <ligand>
        <name>GTP</name>
        <dbReference type="ChEBI" id="CHEBI:37565"/>
    </ligand>
</feature>